<feature type="chain" id="PRO_1000131193" description="PqqA binding protein">
    <location>
        <begin position="1"/>
        <end position="92"/>
    </location>
</feature>
<name>PQQD_XANOP</name>
<accession>B2SSW2</accession>
<proteinExistence type="inferred from homology"/>
<organism>
    <name type="scientific">Xanthomonas oryzae pv. oryzae (strain PXO99A)</name>
    <dbReference type="NCBI Taxonomy" id="360094"/>
    <lineage>
        <taxon>Bacteria</taxon>
        <taxon>Pseudomonadati</taxon>
        <taxon>Pseudomonadota</taxon>
        <taxon>Gammaproteobacteria</taxon>
        <taxon>Lysobacterales</taxon>
        <taxon>Lysobacteraceae</taxon>
        <taxon>Xanthomonas</taxon>
    </lineage>
</organism>
<protein>
    <recommendedName>
        <fullName evidence="1">PqqA binding protein</fullName>
    </recommendedName>
    <alternativeName>
        <fullName evidence="1">Coenzyme PQQ synthesis protein D</fullName>
    </alternativeName>
    <alternativeName>
        <fullName evidence="1">Pyrroloquinoline quinone biosynthesis protein D</fullName>
    </alternativeName>
</protein>
<evidence type="ECO:0000255" key="1">
    <source>
        <dbReference type="HAMAP-Rule" id="MF_00655"/>
    </source>
</evidence>
<reference key="1">
    <citation type="journal article" date="2008" name="BMC Genomics">
        <title>Genome sequence and rapid evolution of the rice pathogen Xanthomonas oryzae pv. oryzae PXO99A.</title>
        <authorList>
            <person name="Salzberg S.L."/>
            <person name="Sommer D.D."/>
            <person name="Schatz M.C."/>
            <person name="Phillippy A.M."/>
            <person name="Rabinowicz P.D."/>
            <person name="Tsuge S."/>
            <person name="Furutani A."/>
            <person name="Ochiai H."/>
            <person name="Delcher A.L."/>
            <person name="Kelley D."/>
            <person name="Madupu R."/>
            <person name="Puiu D."/>
            <person name="Radune D."/>
            <person name="Shumway M."/>
            <person name="Trapnell C."/>
            <person name="Aparna G."/>
            <person name="Jha G."/>
            <person name="Pandey A."/>
            <person name="Patil P.B."/>
            <person name="Ishihara H."/>
            <person name="Meyer D.F."/>
            <person name="Szurek B."/>
            <person name="Verdier V."/>
            <person name="Koebnik R."/>
            <person name="Dow J.M."/>
            <person name="Ryan R.P."/>
            <person name="Hirata H."/>
            <person name="Tsuyumu S."/>
            <person name="Won Lee S."/>
            <person name="Seo Y.-S."/>
            <person name="Sriariyanum M."/>
            <person name="Ronald P.C."/>
            <person name="Sonti R.V."/>
            <person name="Van Sluys M.-A."/>
            <person name="Leach J.E."/>
            <person name="White F.F."/>
            <person name="Bogdanove A.J."/>
        </authorList>
    </citation>
    <scope>NUCLEOTIDE SEQUENCE [LARGE SCALE GENOMIC DNA]</scope>
    <source>
        <strain>PXO99A</strain>
    </source>
</reference>
<sequence>MSSITRDGQPALRAGVRLQYDRARDQWVLLAPERVVELDEIALVVAQRYDGTRSLAQIAQELAAEFDADAADIEADVIELTATLQQKRLLRL</sequence>
<keyword id="KW-0884">PQQ biosynthesis</keyword>
<comment type="function">
    <text evidence="1">Functions as a PqqA binding protein and presents PqqA to PqqE, in the pyrroloquinoline quinone (PQQ) biosynthetic pathway.</text>
</comment>
<comment type="pathway">
    <text evidence="1">Cofactor biosynthesis; pyrroloquinoline quinone biosynthesis.</text>
</comment>
<comment type="subunit">
    <text evidence="1">Monomer. Interacts with PqqE.</text>
</comment>
<comment type="similarity">
    <text evidence="1">Belongs to the PqqD family.</text>
</comment>
<dbReference type="EMBL" id="CP000967">
    <property type="protein sequence ID" value="ACD59801.1"/>
    <property type="molecule type" value="Genomic_DNA"/>
</dbReference>
<dbReference type="RefSeq" id="WP_012445334.1">
    <property type="nucleotide sequence ID" value="NC_010717.2"/>
</dbReference>
<dbReference type="SMR" id="B2SSW2"/>
<dbReference type="KEGG" id="xop:PXO_01589"/>
<dbReference type="eggNOG" id="COG0535">
    <property type="taxonomic scope" value="Bacteria"/>
</dbReference>
<dbReference type="HOGENOM" id="CLU_163864_0_0_6"/>
<dbReference type="UniPathway" id="UPA00539"/>
<dbReference type="Proteomes" id="UP000001740">
    <property type="component" value="Chromosome"/>
</dbReference>
<dbReference type="GO" id="GO:0048038">
    <property type="term" value="F:quinone binding"/>
    <property type="evidence" value="ECO:0007669"/>
    <property type="project" value="InterPro"/>
</dbReference>
<dbReference type="GO" id="GO:0018189">
    <property type="term" value="P:pyrroloquinoline quinone biosynthetic process"/>
    <property type="evidence" value="ECO:0007669"/>
    <property type="project" value="UniProtKB-UniRule"/>
</dbReference>
<dbReference type="Gene3D" id="1.10.10.1150">
    <property type="entry name" value="Coenzyme PQQ synthesis protein D (PqqD)"/>
    <property type="match status" value="1"/>
</dbReference>
<dbReference type="HAMAP" id="MF_00655">
    <property type="entry name" value="PQQ_syn_PqqD"/>
    <property type="match status" value="1"/>
</dbReference>
<dbReference type="InterPro" id="IPR008792">
    <property type="entry name" value="PQQD"/>
</dbReference>
<dbReference type="InterPro" id="IPR022479">
    <property type="entry name" value="PqqD_bac"/>
</dbReference>
<dbReference type="InterPro" id="IPR041881">
    <property type="entry name" value="PqqD_sf"/>
</dbReference>
<dbReference type="NCBIfam" id="TIGR03859">
    <property type="entry name" value="PQQ_PqqD"/>
    <property type="match status" value="1"/>
</dbReference>
<dbReference type="Pfam" id="PF05402">
    <property type="entry name" value="PqqD"/>
    <property type="match status" value="1"/>
</dbReference>
<gene>
    <name evidence="1" type="primary">pqqD</name>
    <name type="ordered locus">PXO_01589</name>
</gene>